<name>RSGA_STAS1</name>
<evidence type="ECO:0000255" key="1">
    <source>
        <dbReference type="HAMAP-Rule" id="MF_01820"/>
    </source>
</evidence>
<evidence type="ECO:0000255" key="2">
    <source>
        <dbReference type="PROSITE-ProRule" id="PRU01058"/>
    </source>
</evidence>
<reference key="1">
    <citation type="journal article" date="2005" name="Proc. Natl. Acad. Sci. U.S.A.">
        <title>Whole genome sequence of Staphylococcus saprophyticus reveals the pathogenesis of uncomplicated urinary tract infection.</title>
        <authorList>
            <person name="Kuroda M."/>
            <person name="Yamashita A."/>
            <person name="Hirakawa H."/>
            <person name="Kumano M."/>
            <person name="Morikawa K."/>
            <person name="Higashide M."/>
            <person name="Maruyama A."/>
            <person name="Inose Y."/>
            <person name="Matoba K."/>
            <person name="Toh H."/>
            <person name="Kuhara S."/>
            <person name="Hattori M."/>
            <person name="Ohta T."/>
        </authorList>
    </citation>
    <scope>NUCLEOTIDE SEQUENCE [LARGE SCALE GENOMIC DNA]</scope>
    <source>
        <strain>ATCC 15305 / DSM 20229 / NCIMB 8711 / NCTC 7292 / S-41</strain>
    </source>
</reference>
<proteinExistence type="inferred from homology"/>
<dbReference type="EC" id="3.6.1.-" evidence="1"/>
<dbReference type="EMBL" id="AP008934">
    <property type="protein sequence ID" value="BAE18696.1"/>
    <property type="molecule type" value="Genomic_DNA"/>
</dbReference>
<dbReference type="RefSeq" id="WP_011303295.1">
    <property type="nucleotide sequence ID" value="NC_007350.1"/>
</dbReference>
<dbReference type="SMR" id="Q49X02"/>
<dbReference type="GeneID" id="3615197"/>
<dbReference type="KEGG" id="ssp:SSP1551"/>
<dbReference type="PATRIC" id="fig|342451.11.peg.1553"/>
<dbReference type="eggNOG" id="COG1162">
    <property type="taxonomic scope" value="Bacteria"/>
</dbReference>
<dbReference type="HOGENOM" id="CLU_033617_2_1_9"/>
<dbReference type="OrthoDB" id="9809485at2"/>
<dbReference type="Proteomes" id="UP000006371">
    <property type="component" value="Chromosome"/>
</dbReference>
<dbReference type="GO" id="GO:0005737">
    <property type="term" value="C:cytoplasm"/>
    <property type="evidence" value="ECO:0007669"/>
    <property type="project" value="UniProtKB-SubCell"/>
</dbReference>
<dbReference type="GO" id="GO:0005525">
    <property type="term" value="F:GTP binding"/>
    <property type="evidence" value="ECO:0007669"/>
    <property type="project" value="UniProtKB-UniRule"/>
</dbReference>
<dbReference type="GO" id="GO:0003924">
    <property type="term" value="F:GTPase activity"/>
    <property type="evidence" value="ECO:0007669"/>
    <property type="project" value="UniProtKB-UniRule"/>
</dbReference>
<dbReference type="GO" id="GO:0046872">
    <property type="term" value="F:metal ion binding"/>
    <property type="evidence" value="ECO:0007669"/>
    <property type="project" value="UniProtKB-KW"/>
</dbReference>
<dbReference type="GO" id="GO:0019843">
    <property type="term" value="F:rRNA binding"/>
    <property type="evidence" value="ECO:0007669"/>
    <property type="project" value="UniProtKB-KW"/>
</dbReference>
<dbReference type="GO" id="GO:0042274">
    <property type="term" value="P:ribosomal small subunit biogenesis"/>
    <property type="evidence" value="ECO:0007669"/>
    <property type="project" value="UniProtKB-UniRule"/>
</dbReference>
<dbReference type="CDD" id="cd04466">
    <property type="entry name" value="S1_YloQ_GTPase"/>
    <property type="match status" value="1"/>
</dbReference>
<dbReference type="CDD" id="cd01854">
    <property type="entry name" value="YjeQ_EngC"/>
    <property type="match status" value="1"/>
</dbReference>
<dbReference type="Gene3D" id="2.40.50.140">
    <property type="entry name" value="Nucleic acid-binding proteins"/>
    <property type="match status" value="1"/>
</dbReference>
<dbReference type="Gene3D" id="3.40.50.300">
    <property type="entry name" value="P-loop containing nucleotide triphosphate hydrolases"/>
    <property type="match status" value="1"/>
</dbReference>
<dbReference type="Gene3D" id="1.10.40.50">
    <property type="entry name" value="Probable gtpase engc, domain 3"/>
    <property type="match status" value="1"/>
</dbReference>
<dbReference type="HAMAP" id="MF_01820">
    <property type="entry name" value="GTPase_RsgA"/>
    <property type="match status" value="1"/>
</dbReference>
<dbReference type="InterPro" id="IPR030378">
    <property type="entry name" value="G_CP_dom"/>
</dbReference>
<dbReference type="InterPro" id="IPR012340">
    <property type="entry name" value="NA-bd_OB-fold"/>
</dbReference>
<dbReference type="InterPro" id="IPR027417">
    <property type="entry name" value="P-loop_NTPase"/>
</dbReference>
<dbReference type="InterPro" id="IPR004881">
    <property type="entry name" value="Ribosome_biogen_GTPase_RsgA"/>
</dbReference>
<dbReference type="InterPro" id="IPR010914">
    <property type="entry name" value="RsgA_GTPase_dom"/>
</dbReference>
<dbReference type="InterPro" id="IPR031944">
    <property type="entry name" value="RsgA_N"/>
</dbReference>
<dbReference type="NCBIfam" id="TIGR00157">
    <property type="entry name" value="ribosome small subunit-dependent GTPase A"/>
    <property type="match status" value="1"/>
</dbReference>
<dbReference type="PANTHER" id="PTHR32120">
    <property type="entry name" value="SMALL RIBOSOMAL SUBUNIT BIOGENESIS GTPASE RSGA"/>
    <property type="match status" value="1"/>
</dbReference>
<dbReference type="PANTHER" id="PTHR32120:SF11">
    <property type="entry name" value="SMALL RIBOSOMAL SUBUNIT BIOGENESIS GTPASE RSGA 1, MITOCHONDRIAL-RELATED"/>
    <property type="match status" value="1"/>
</dbReference>
<dbReference type="Pfam" id="PF03193">
    <property type="entry name" value="RsgA_GTPase"/>
    <property type="match status" value="1"/>
</dbReference>
<dbReference type="Pfam" id="PF16745">
    <property type="entry name" value="RsgA_N"/>
    <property type="match status" value="1"/>
</dbReference>
<dbReference type="SUPFAM" id="SSF50249">
    <property type="entry name" value="Nucleic acid-binding proteins"/>
    <property type="match status" value="1"/>
</dbReference>
<dbReference type="SUPFAM" id="SSF52540">
    <property type="entry name" value="P-loop containing nucleoside triphosphate hydrolases"/>
    <property type="match status" value="1"/>
</dbReference>
<dbReference type="PROSITE" id="PS50936">
    <property type="entry name" value="ENGC_GTPASE"/>
    <property type="match status" value="1"/>
</dbReference>
<dbReference type="PROSITE" id="PS51721">
    <property type="entry name" value="G_CP"/>
    <property type="match status" value="1"/>
</dbReference>
<protein>
    <recommendedName>
        <fullName evidence="1">Small ribosomal subunit biogenesis GTPase RsgA</fullName>
        <ecNumber evidence="1">3.6.1.-</ecNumber>
    </recommendedName>
</protein>
<sequence>MKTGRIIKSISGVYRVDVDGEMYDTKPRGLFRKNKFSPIVGDVVDFEVENVTEGYIHHVHERKNEIKRPPVSNVDHLIIVMSAVEPDFSTQLLDRFLVIAHSYHMRPRILVTKKDLTSLEKQHDIEKLLEVYENMSYKTQFISINEDIEQVFSSWGDGLAVLSGQSGVGKSTLLNKYFPNIEIETQHISKALNRGRHTTRHVELFERAKGFIADTPGFSALDYDHIQKDEIKNYFMEIHEYGATCKFRDCNHINEPKCNVKAELENGNIAQFRYDHYLQLFKEISNRKERY</sequence>
<gene>
    <name evidence="1" type="primary">rsgA</name>
    <name type="ordered locus">SSP1551</name>
</gene>
<feature type="chain" id="PRO_0000171522" description="Small ribosomal subunit biogenesis GTPase RsgA">
    <location>
        <begin position="1"/>
        <end position="291"/>
    </location>
</feature>
<feature type="domain" description="CP-type G" evidence="2">
    <location>
        <begin position="63"/>
        <end position="221"/>
    </location>
</feature>
<feature type="binding site" evidence="1">
    <location>
        <begin position="112"/>
        <end position="115"/>
    </location>
    <ligand>
        <name>GTP</name>
        <dbReference type="ChEBI" id="CHEBI:37565"/>
    </ligand>
</feature>
<feature type="binding site" evidence="1">
    <location>
        <begin position="164"/>
        <end position="172"/>
    </location>
    <ligand>
        <name>GTP</name>
        <dbReference type="ChEBI" id="CHEBI:37565"/>
    </ligand>
</feature>
<feature type="binding site" evidence="1">
    <location>
        <position position="245"/>
    </location>
    <ligand>
        <name>Zn(2+)</name>
        <dbReference type="ChEBI" id="CHEBI:29105"/>
    </ligand>
</feature>
<feature type="binding site" evidence="1">
    <location>
        <position position="250"/>
    </location>
    <ligand>
        <name>Zn(2+)</name>
        <dbReference type="ChEBI" id="CHEBI:29105"/>
    </ligand>
</feature>
<feature type="binding site" evidence="1">
    <location>
        <position position="252"/>
    </location>
    <ligand>
        <name>Zn(2+)</name>
        <dbReference type="ChEBI" id="CHEBI:29105"/>
    </ligand>
</feature>
<feature type="binding site" evidence="1">
    <location>
        <position position="258"/>
    </location>
    <ligand>
        <name>Zn(2+)</name>
        <dbReference type="ChEBI" id="CHEBI:29105"/>
    </ligand>
</feature>
<accession>Q49X02</accession>
<keyword id="KW-0963">Cytoplasm</keyword>
<keyword id="KW-0342">GTP-binding</keyword>
<keyword id="KW-0378">Hydrolase</keyword>
<keyword id="KW-0479">Metal-binding</keyword>
<keyword id="KW-0547">Nucleotide-binding</keyword>
<keyword id="KW-1185">Reference proteome</keyword>
<keyword id="KW-0690">Ribosome biogenesis</keyword>
<keyword id="KW-0694">RNA-binding</keyword>
<keyword id="KW-0699">rRNA-binding</keyword>
<keyword id="KW-0862">Zinc</keyword>
<organism>
    <name type="scientific">Staphylococcus saprophyticus subsp. saprophyticus (strain ATCC 15305 / DSM 20229 / NCIMB 8711 / NCTC 7292 / S-41)</name>
    <dbReference type="NCBI Taxonomy" id="342451"/>
    <lineage>
        <taxon>Bacteria</taxon>
        <taxon>Bacillati</taxon>
        <taxon>Bacillota</taxon>
        <taxon>Bacilli</taxon>
        <taxon>Bacillales</taxon>
        <taxon>Staphylococcaceae</taxon>
        <taxon>Staphylococcus</taxon>
    </lineage>
</organism>
<comment type="function">
    <text evidence="1">One of several proteins that assist in the late maturation steps of the functional core of the 30S ribosomal subunit. Helps release RbfA from mature subunits. May play a role in the assembly of ribosomal proteins into the subunit. Circularly permuted GTPase that catalyzes slow GTP hydrolysis, GTPase activity is stimulated by the 30S ribosomal subunit.</text>
</comment>
<comment type="cofactor">
    <cofactor evidence="1">
        <name>Zn(2+)</name>
        <dbReference type="ChEBI" id="CHEBI:29105"/>
    </cofactor>
    <text evidence="1">Binds 1 zinc ion per subunit.</text>
</comment>
<comment type="subunit">
    <text evidence="1">Monomer. Associates with 30S ribosomal subunit, binds 16S rRNA.</text>
</comment>
<comment type="subcellular location">
    <subcellularLocation>
        <location evidence="1">Cytoplasm</location>
    </subcellularLocation>
</comment>
<comment type="similarity">
    <text evidence="1">Belongs to the TRAFAC class YlqF/YawG GTPase family. RsgA subfamily.</text>
</comment>